<keyword id="KW-0020">Allergen</keyword>
<keyword id="KW-0134">Cell wall</keyword>
<keyword id="KW-0903">Direct protein sequencing</keyword>
<keyword id="KW-1015">Disulfide bond</keyword>
<keyword id="KW-0256">Endoplasmic reticulum</keyword>
<keyword id="KW-0964">Secreted</keyword>
<keyword id="KW-0732">Signal</keyword>
<proteinExistence type="evidence at protein level"/>
<evidence type="ECO:0000250" key="1">
    <source>
        <dbReference type="UniProtKB" id="Q9LNF2"/>
    </source>
</evidence>
<evidence type="ECO:0000269" key="2">
    <source>
    </source>
</evidence>
<evidence type="ECO:0000269" key="3">
    <source>
    </source>
</evidence>
<evidence type="ECO:0000269" key="4">
    <source>
    </source>
</evidence>
<evidence type="ECO:0000269" key="5">
    <source>
    </source>
</evidence>
<evidence type="ECO:0000269" key="6">
    <source ref="4"/>
</evidence>
<evidence type="ECO:0000303" key="7">
    <source>
    </source>
</evidence>
<evidence type="ECO:0000303" key="8">
    <source>
    </source>
</evidence>
<evidence type="ECO:0000303" key="9">
    <source>
    </source>
</evidence>
<evidence type="ECO:0000303" key="10">
    <source>
    </source>
</evidence>
<evidence type="ECO:0000303" key="11">
    <source ref="4"/>
</evidence>
<evidence type="ECO:0000305" key="12"/>
<evidence type="ECO:0000305" key="13">
    <source>
    </source>
</evidence>
<evidence type="ECO:0000305" key="14">
    <source>
    </source>
</evidence>
<reference key="1">
    <citation type="journal article" date="2003" name="Clin. Exp. Allergy">
        <title>The major Platanus acerifolia pollen allergen Pla a 1 has sequence homology to invertase inhibitors.</title>
        <authorList>
            <person name="Asturias J.A."/>
            <person name="Ibarrola I."/>
            <person name="Eraso E."/>
            <person name="Arilla M.C."/>
            <person name="Martinez A."/>
        </authorList>
    </citation>
    <scope>NUCLEOTIDE SEQUENCE [MRNA]</scope>
    <scope>PROTEIN SEQUENCE OF 24-35; 49-55; 61-71; 113-121 AND 151-158</scope>
    <scope>TISSUE SPECIFICITY</scope>
    <scope>ALLERGEN</scope>
    <source>
        <tissue evidence="8">Pollen</tissue>
    </source>
</reference>
<reference key="2">
    <citation type="journal article" date="2002" name="Allergy">
        <title>Purification and characterization of Pla a 1, a major allergen from Platanus acerifolia pollen.</title>
        <authorList>
            <person name="Asturias J.A."/>
            <person name="Ibarrola I."/>
            <person name="Bartolome B."/>
            <person name="Ojeda I."/>
            <person name="Malet A."/>
            <person name="Martinez A."/>
        </authorList>
    </citation>
    <scope>PROTEIN SEQUENCE OF 24-35</scope>
    <scope>SUBUNIT</scope>
    <scope>TISSUE SPECIFICITY</scope>
    <scope>PTM</scope>
    <scope>ALLERGEN</scope>
    <source>
        <tissue evidence="7">Pollen</tissue>
    </source>
</reference>
<reference key="3">
    <citation type="journal article" date="2005" name="Int. Arch. Allergy Immunol.">
        <title>Development of a sandwich-type ELISA for measuring Pla a 1, the major allergen of Platanus acerifolia pollen.</title>
        <authorList>
            <person name="Arilla M.C."/>
            <person name="Ibarrola I."/>
            <person name="Mir A."/>
            <person name="Monteseirin J."/>
            <person name="Conde J."/>
            <person name="Martinez A."/>
            <person name="Asturias J.A."/>
        </authorList>
    </citation>
    <scope>TISSUE SPECIFICITY</scope>
    <scope>ALLERGEN</scope>
    <scope>BIOTECHNOLOGY</scope>
</reference>
<reference key="4">
    <citation type="journal article" date="2005" name="Sex. Plant Reprod.">
        <title>The role of allergenic proteins Pla a 1 and Pla a 2 in the germination of Platanus acerifolia pollen grains.</title>
        <authorList>
            <person name="Suarez-Cervera M."/>
            <person name="Asturias J.A."/>
            <person name="Vega-Maray A."/>
            <person name="Castells T."/>
            <person name="Lopez-Iglesias C."/>
            <person name="Ibarrola I."/>
            <person name="Arilla M.C."/>
            <person name="Gabarayeva N."/>
            <person name="Seoane-Camba J.A."/>
        </authorList>
    </citation>
    <scope>SUBCELLULAR LOCATION</scope>
    <scope>TISSUE SPECIFICITY</scope>
</reference>
<reference key="5">
    <citation type="journal article" date="2006" name="Clin. Exp. Allergy">
        <title>Purified allergens vs. complete extract in the diagnosis of plane tree pollen allergy.</title>
        <authorList>
            <person name="Asturias J.A."/>
            <person name="Ibarrola I."/>
            <person name="Amat P."/>
            <person name="Tella R."/>
            <person name="Malet A."/>
            <person name="Cistero-Bahima A."/>
            <person name="Enrique E."/>
            <person name="Malek T."/>
            <person name="Martinez A."/>
        </authorList>
    </citation>
    <scope>TISSUE SPECIFICITY</scope>
    <scope>ALLERGEN</scope>
    <scope>BIOTECHNOLOGY</scope>
</reference>
<sequence length="179" mass="19282">MKLSFSLCIFFFNLLLLLQAVISADIVQGTCKKVAQRSPNVNYDFCVKSLGADPKSHTADLQGLGVISANLAIQHGSKIQTFIGRILKSKVDPALKKYLNDCVGLYADAKSSVQEAIADFKSKDYASANVKMSAALDDSVTCEDGFKEKKGIVSPVTKENKDYVQLTAISLAITKLLGA</sequence>
<organism>
    <name type="scientific">Platanus acerifolia</name>
    <name type="common">London plane tree</name>
    <dbReference type="NCBI Taxonomy" id="140101"/>
    <lineage>
        <taxon>Eukaryota</taxon>
        <taxon>Viridiplantae</taxon>
        <taxon>Streptophyta</taxon>
        <taxon>Embryophyta</taxon>
        <taxon>Tracheophyta</taxon>
        <taxon>Spermatophyta</taxon>
        <taxon>Magnoliopsida</taxon>
        <taxon>Proteales</taxon>
        <taxon>Platanaceae</taxon>
        <taxon>Platanus</taxon>
    </lineage>
</organism>
<protein>
    <recommendedName>
        <fullName>Putative invertase inhibitor</fullName>
    </recommendedName>
    <alternativeName>
        <fullName evidence="7 8 9 10 11">Pollen allergen Pla a 1</fullName>
    </alternativeName>
    <allergenName evidence="12">Pla a 1.0101</allergenName>
</protein>
<dbReference type="EMBL" id="AJ427413">
    <property type="protein sequence ID" value="CAD20556.1"/>
    <property type="molecule type" value="mRNA"/>
</dbReference>
<dbReference type="SMR" id="Q8GT41"/>
<dbReference type="Allergome" id="3425">
    <property type="allergen name" value="Pla a 1.0101"/>
</dbReference>
<dbReference type="Allergome" id="572">
    <property type="allergen name" value="Pla a 1"/>
</dbReference>
<dbReference type="GO" id="GO:0005783">
    <property type="term" value="C:endoplasmic reticulum"/>
    <property type="evidence" value="ECO:0000314"/>
    <property type="project" value="UniProtKB"/>
</dbReference>
<dbReference type="GO" id="GO:0005576">
    <property type="term" value="C:extracellular region"/>
    <property type="evidence" value="ECO:0000314"/>
    <property type="project" value="UniProtKB"/>
</dbReference>
<dbReference type="GO" id="GO:0043667">
    <property type="term" value="C:pollen wall"/>
    <property type="evidence" value="ECO:0000314"/>
    <property type="project" value="UniProtKB"/>
</dbReference>
<dbReference type="GO" id="GO:0004857">
    <property type="term" value="F:enzyme inhibitor activity"/>
    <property type="evidence" value="ECO:0007669"/>
    <property type="project" value="InterPro"/>
</dbReference>
<dbReference type="GO" id="GO:0009555">
    <property type="term" value="P:pollen development"/>
    <property type="evidence" value="ECO:0000270"/>
    <property type="project" value="UniProtKB"/>
</dbReference>
<dbReference type="GO" id="GO:0009846">
    <property type="term" value="P:pollen germination"/>
    <property type="evidence" value="ECO:0000270"/>
    <property type="project" value="UniProtKB"/>
</dbReference>
<dbReference type="CDD" id="cd15795">
    <property type="entry name" value="PMEI-Pla_a_1_like"/>
    <property type="match status" value="1"/>
</dbReference>
<dbReference type="FunFam" id="1.20.140.40:FF:000002">
    <property type="entry name" value="Putative invertase inhibitor"/>
    <property type="match status" value="1"/>
</dbReference>
<dbReference type="Gene3D" id="1.20.140.40">
    <property type="entry name" value="Invertase/pectin methylesterase inhibitor family protein"/>
    <property type="match status" value="1"/>
</dbReference>
<dbReference type="InterPro" id="IPR035513">
    <property type="entry name" value="Invertase/methylesterase_inhib"/>
</dbReference>
<dbReference type="InterPro" id="IPR006501">
    <property type="entry name" value="Pectinesterase_inhib_dom"/>
</dbReference>
<dbReference type="InterPro" id="IPR034088">
    <property type="entry name" value="Pla_a_1-like"/>
</dbReference>
<dbReference type="NCBIfam" id="TIGR01614">
    <property type="entry name" value="PME_inhib"/>
    <property type="match status" value="1"/>
</dbReference>
<dbReference type="PANTHER" id="PTHR35357">
    <property type="entry name" value="OS02G0537100 PROTEIN"/>
    <property type="match status" value="1"/>
</dbReference>
<dbReference type="PANTHER" id="PTHR35357:SF17">
    <property type="entry name" value="PECTINESTERASE INHIBITOR 12"/>
    <property type="match status" value="1"/>
</dbReference>
<dbReference type="Pfam" id="PF04043">
    <property type="entry name" value="PMEI"/>
    <property type="match status" value="1"/>
</dbReference>
<dbReference type="SMART" id="SM00856">
    <property type="entry name" value="PMEI"/>
    <property type="match status" value="1"/>
</dbReference>
<dbReference type="SUPFAM" id="SSF101148">
    <property type="entry name" value="Plant invertase/pectin methylesterase inhibitor"/>
    <property type="match status" value="1"/>
</dbReference>
<comment type="function">
    <text evidence="12">Invertase inhibitor (Probable).</text>
</comment>
<comment type="subunit">
    <text evidence="2">Monomer.</text>
</comment>
<comment type="subcellular location">
    <subcellularLocation>
        <location evidence="6">Secreted</location>
    </subcellularLocation>
    <subcellularLocation>
        <location evidence="6">Secreted</location>
        <location evidence="6">Cell wall</location>
    </subcellularLocation>
    <subcellularLocation>
        <location evidence="6">Endoplasmic reticulum</location>
    </subcellularLocation>
    <text evidence="6">After 5 minutes in germination medium, detected as a soluble protein and released from apertural and non-apertural regions of pollen grain wall. In mature, non-hydrated pollen grains, predominantly associated with the endoplasmic reticulum (ER) concentric cisternae, which are situated between the vegetative nucleus and the generative cell. After 5, 15 and 30 minutes as well as 2 hours of hydration, localization to this ER region is noticeably decreased.</text>
</comment>
<comment type="tissue specificity">
    <text evidence="2 3 4 5 6">Expressed in pollen (at protein level) (PubMed:11906336, PubMed:12859456, PubMed:16179793, PubMed:17177673, Ref.4). Expressed in stem, but not leaves (at protein level) (PubMed:12859456). Expressed in pollen (PubMed:12859456).</text>
</comment>
<comment type="PTM">
    <text evidence="2">Not glycosylated.</text>
</comment>
<comment type="allergen">
    <text evidence="2 3 4 5">Causes an allergic reaction in human. Binds to IgE of patients allergic to London plane tree pollen (PubMed:11906336, PubMed:12859456, PubMed:16179793, PubMed:17177673). Binds to IgE in 83% of the 42 patients tested (PubMed:12859456). Binds to IgE in 92% of the 12 patients tested (PubMed:11906336). Binds to IgE in 79% of the 47 Spanish patients tested (PubMed:16179793). Binds to IgE in 75% of the 26 patients tested (PubMed:17177673). Binds to IgE in 83% of the 18 patients tested allergic London plane tree pollen as well as other pollens including grass and olive (PubMed:11906336).</text>
</comment>
<comment type="biotechnology">
    <text evidence="4 5">The developed two-site sandwich ELISA assay to quantify this protein in P.acerifolia pollen extracts could be useful for the quality control of allergen preparations intended for clinical use (PubMed:16179793). Could be used together with allergen Pla a 2 for a reliable diagnosis of London plane tree (P.acerifolia) pollen allergy by skin prick test (SPT) in most patients of the cohort of 47 tested with a sensitivity of over 90% and a specificity of 100% (PubMed:17177673).</text>
</comment>
<comment type="similarity">
    <text evidence="12">Belongs to the PMEI family.</text>
</comment>
<accession>Q8GT41</accession>
<accession>P82817</accession>
<name>PLA1_PLAAC</name>
<feature type="signal peptide" evidence="2 3">
    <location>
        <begin position="1"/>
        <end position="23"/>
    </location>
</feature>
<feature type="chain" id="PRO_0000024708" description="Putative invertase inhibitor" evidence="13 14">
    <location>
        <begin position="24"/>
        <end position="179"/>
    </location>
</feature>
<feature type="disulfide bond" evidence="1">
    <location>
        <begin position="31"/>
        <end position="46"/>
    </location>
</feature>
<feature type="disulfide bond" evidence="1">
    <location>
        <begin position="102"/>
        <end position="142"/>
    </location>
</feature>